<feature type="chain" id="PRO_0000087627" description="U7-ctenitoxin-Pk1a">
    <location>
        <begin position="1"/>
        <end position="54"/>
    </location>
</feature>
<feature type="disulfide bond" evidence="3">
    <location>
        <begin position="3"/>
        <end position="17"/>
    </location>
</feature>
<feature type="disulfide bond" evidence="3">
    <location>
        <begin position="10"/>
        <end position="23"/>
    </location>
</feature>
<feature type="disulfide bond" evidence="3">
    <location>
        <begin position="14"/>
        <end position="52"/>
    </location>
</feature>
<feature type="disulfide bond" evidence="3">
    <location>
        <begin position="16"/>
        <end position="37"/>
    </location>
</feature>
<feature type="disulfide bond" evidence="3">
    <location>
        <begin position="25"/>
        <end position="35"/>
    </location>
</feature>
<sequence length="54" mass="5979">ATCAGQDKPCKETCDCCGERGECVCGLSYEGKYRCICRQGTFLIAWYKLASCKK</sequence>
<organism>
    <name type="scientific">Phoneutria keyserlingi</name>
    <name type="common">Brazilian wandering spider</name>
    <name type="synonym">Ctenus keyserlingii</name>
    <dbReference type="NCBI Taxonomy" id="272754"/>
    <lineage>
        <taxon>Eukaryota</taxon>
        <taxon>Metazoa</taxon>
        <taxon>Ecdysozoa</taxon>
        <taxon>Arthropoda</taxon>
        <taxon>Chelicerata</taxon>
        <taxon>Arachnida</taxon>
        <taxon>Araneae</taxon>
        <taxon>Araneomorphae</taxon>
        <taxon>Entelegynae</taxon>
        <taxon>Lycosoidea</taxon>
        <taxon>Ctenidae</taxon>
        <taxon>Phoneutria</taxon>
    </lineage>
</organism>
<name>TX34A_PHOKE</name>
<accession>P84012</accession>
<proteinExistence type="evidence at protein level"/>
<reference evidence="3" key="1">
    <citation type="journal article" date="2006" name="Comp. Biochem. Physiol.">
        <title>Comparison of the partial proteomes of the venoms of Brazilian spiders of the genus Phoneutria.</title>
        <authorList>
            <person name="Richardson M."/>
            <person name="Pimenta A.M."/>
            <person name="Bemquerer M.P."/>
            <person name="Santoro M.M."/>
            <person name="Beirao P.S."/>
            <person name="Lima M.E."/>
            <person name="Figueiredo S.G."/>
            <person name="Bloch C. Jr."/>
            <person name="Vasconcelos E.A."/>
            <person name="Campos F.A."/>
            <person name="Gomes P.C."/>
            <person name="Cordeiro M.N."/>
        </authorList>
    </citation>
    <scope>PROTEIN SEQUENCE</scope>
    <scope>SUBCELLULAR LOCATION</scope>
    <scope>TISSUE SPECIFICITY</scope>
    <scope>MASS SPECTROMETRY</scope>
    <source>
        <tissue evidence="1">Venom</tissue>
    </source>
</reference>
<reference evidence="3" key="2">
    <citation type="submission" date="2004-06" db="UniProtKB">
        <title>Lethal neurotoxin PKTx36C1 from venom of Brazilian wandering spider Phoneutria keyserlingi has sequence similarities with toxins from other spiders which block voltage gated Na channels.</title>
        <authorList>
            <person name="Richardson M."/>
            <person name="Pimenta A.M.C."/>
            <person name="Bemquerer M.P."/>
            <person name="Santoro M.M."/>
            <person name="Figueiredo S.G."/>
            <person name="Cordeiro M.N."/>
        </authorList>
    </citation>
    <scope>FUNCTION</scope>
</reference>
<comment type="function">
    <text evidence="2">Blocks voltage-gated sodium channels (Nav). Causes immediate spastic paralysis and death in mice within 1 minute of injection at dose levels of 1.5 ug per mouse.</text>
</comment>
<comment type="subcellular location">
    <subcellularLocation>
        <location evidence="1">Secreted</location>
    </subcellularLocation>
</comment>
<comment type="tissue specificity">
    <text evidence="1">Expressed by the venom gland.</text>
</comment>
<comment type="domain">
    <text evidence="3">The presence of a 'disulfide through disulfide knot' structurally defines this protein as a knottin.</text>
</comment>
<comment type="mass spectrometry" mass="5970.2" method="Electrospray" evidence="1"/>
<comment type="similarity">
    <text evidence="3">Belongs to the neurotoxin 03 (Tx2) family. 04 subfamily.</text>
</comment>
<protein>
    <recommendedName>
        <fullName>U7-ctenitoxin-Pk1a</fullName>
        <shortName>U7-CNTX-Pk1a</shortName>
    </recommendedName>
    <alternativeName>
        <fullName>Neurotoxin PKTx36C1</fullName>
    </alternativeName>
</protein>
<evidence type="ECO:0000269" key="1">
    <source>
    </source>
</evidence>
<evidence type="ECO:0000269" key="2">
    <source ref="2"/>
</evidence>
<evidence type="ECO:0000305" key="3"/>
<keyword id="KW-0903">Direct protein sequencing</keyword>
<keyword id="KW-1015">Disulfide bond</keyword>
<keyword id="KW-0872">Ion channel impairing toxin</keyword>
<keyword id="KW-0960">Knottin</keyword>
<keyword id="KW-0528">Neurotoxin</keyword>
<keyword id="KW-0964">Secreted</keyword>
<keyword id="KW-0800">Toxin</keyword>
<keyword id="KW-0738">Voltage-gated sodium channel impairing toxin</keyword>
<dbReference type="SMR" id="P84012"/>
<dbReference type="ArachnoServer" id="AS000268">
    <property type="toxin name" value="U7-ctenitoxin-Pk1a"/>
</dbReference>
<dbReference type="GO" id="GO:0005576">
    <property type="term" value="C:extracellular region"/>
    <property type="evidence" value="ECO:0007669"/>
    <property type="project" value="UniProtKB-SubCell"/>
</dbReference>
<dbReference type="GO" id="GO:0017080">
    <property type="term" value="F:sodium channel regulator activity"/>
    <property type="evidence" value="ECO:0007669"/>
    <property type="project" value="UniProtKB-KW"/>
</dbReference>
<dbReference type="GO" id="GO:0090729">
    <property type="term" value="F:toxin activity"/>
    <property type="evidence" value="ECO:0007669"/>
    <property type="project" value="UniProtKB-KW"/>
</dbReference>
<dbReference type="InterPro" id="IPR035285">
    <property type="entry name" value="CNTX"/>
</dbReference>
<dbReference type="Pfam" id="PF17492">
    <property type="entry name" value="D_CNTX"/>
    <property type="match status" value="1"/>
</dbReference>